<feature type="signal peptide" evidence="5">
    <location>
        <begin position="1"/>
        <end position="40"/>
    </location>
</feature>
<feature type="chain" id="PRO_0000292567" description="Iron-regulated surface determinant protein B">
    <location>
        <begin position="41"/>
        <end position="613"/>
    </location>
</feature>
<feature type="propeptide" id="PRO_0000292568" description="Removed by sortase" evidence="7">
    <location>
        <begin position="614"/>
        <end position="645"/>
    </location>
</feature>
<feature type="domain" description="NEAT 1" evidence="6">
    <location>
        <begin position="144"/>
        <end position="269"/>
    </location>
</feature>
<feature type="domain" description="NEAT 2" evidence="6">
    <location>
        <begin position="341"/>
        <end position="458"/>
    </location>
</feature>
<feature type="region of interest" description="Disordered" evidence="8">
    <location>
        <begin position="38"/>
        <end position="113"/>
    </location>
</feature>
<feature type="region of interest" description="Disordered" evidence="8">
    <location>
        <begin position="458"/>
        <end position="619"/>
    </location>
</feature>
<feature type="short sequence motif" description="YSIRK-G/S signaling motif" evidence="3">
    <location>
        <begin position="12"/>
        <end position="23"/>
    </location>
</feature>
<feature type="short sequence motif" description="LPXTG sorting signal" evidence="7">
    <location>
        <begin position="610"/>
        <end position="614"/>
    </location>
</feature>
<feature type="compositionally biased region" description="Low complexity" evidence="8">
    <location>
        <begin position="38"/>
        <end position="53"/>
    </location>
</feature>
<feature type="compositionally biased region" description="Basic and acidic residues" evidence="8">
    <location>
        <begin position="84"/>
        <end position="113"/>
    </location>
</feature>
<feature type="compositionally biased region" description="Basic and acidic residues" evidence="8">
    <location>
        <begin position="458"/>
        <end position="476"/>
    </location>
</feature>
<feature type="compositionally biased region" description="Basic and acidic residues" evidence="8">
    <location>
        <begin position="489"/>
        <end position="534"/>
    </location>
</feature>
<feature type="compositionally biased region" description="Low complexity" evidence="8">
    <location>
        <begin position="535"/>
        <end position="560"/>
    </location>
</feature>
<feature type="compositionally biased region" description="Polar residues" evidence="8">
    <location>
        <begin position="585"/>
        <end position="615"/>
    </location>
</feature>
<feature type="binding site" description="axial binding residue" evidence="4">
    <location>
        <position position="362"/>
    </location>
    <ligand>
        <name>heme</name>
        <dbReference type="ChEBI" id="CHEBI:30413"/>
    </ligand>
    <ligandPart>
        <name>Fe</name>
        <dbReference type="ChEBI" id="CHEBI:18248"/>
    </ligandPart>
</feature>
<feature type="binding site" description="axial binding residue" evidence="4">
    <location>
        <position position="440"/>
    </location>
    <ligand>
        <name>heme</name>
        <dbReference type="ChEBI" id="CHEBI:30413"/>
    </ligand>
    <ligandPart>
        <name>Fe</name>
        <dbReference type="ChEBI" id="CHEBI:18248"/>
    </ligandPart>
</feature>
<feature type="modified residue" description="Pentaglycyl murein peptidoglycan amidated threonine" evidence="7">
    <location>
        <position position="613"/>
    </location>
</feature>
<evidence type="ECO:0000250" key="1"/>
<evidence type="ECO:0000250" key="2">
    <source>
        <dbReference type="UniProtKB" id="A6QG30"/>
    </source>
</evidence>
<evidence type="ECO:0000250" key="3">
    <source>
        <dbReference type="UniProtKB" id="Q2FZF0"/>
    </source>
</evidence>
<evidence type="ECO:0000250" key="4">
    <source>
        <dbReference type="UniProtKB" id="Q7A656"/>
    </source>
</evidence>
<evidence type="ECO:0000255" key="5"/>
<evidence type="ECO:0000255" key="6">
    <source>
        <dbReference type="PROSITE-ProRule" id="PRU00337"/>
    </source>
</evidence>
<evidence type="ECO:0000255" key="7">
    <source>
        <dbReference type="PROSITE-ProRule" id="PRU00477"/>
    </source>
</evidence>
<evidence type="ECO:0000256" key="8">
    <source>
        <dbReference type="SAM" id="MobiDB-lite"/>
    </source>
</evidence>
<evidence type="ECO:0000269" key="9">
    <source>
    </source>
</evidence>
<evidence type="ECO:0000305" key="10"/>
<dbReference type="EMBL" id="CP000046">
    <property type="protein sequence ID" value="AAW38018.1"/>
    <property type="molecule type" value="Genomic_DNA"/>
</dbReference>
<dbReference type="RefSeq" id="WP_001041586.1">
    <property type="nucleotide sequence ID" value="NZ_JBGOFO010000002.1"/>
</dbReference>
<dbReference type="SMR" id="Q5HGV5"/>
<dbReference type="ABCD" id="Q5HGV5">
    <property type="antibodies" value="3 sequenced antibodies"/>
</dbReference>
<dbReference type="KEGG" id="sac:SACOL1138"/>
<dbReference type="HOGENOM" id="CLU_016167_0_0_9"/>
<dbReference type="PRO" id="PR:Q5HGV5"/>
<dbReference type="Proteomes" id="UP000000530">
    <property type="component" value="Chromosome"/>
</dbReference>
<dbReference type="GO" id="GO:0005576">
    <property type="term" value="C:extracellular region"/>
    <property type="evidence" value="ECO:0007669"/>
    <property type="project" value="UniProtKB-KW"/>
</dbReference>
<dbReference type="GO" id="GO:0015232">
    <property type="term" value="F:heme transmembrane transporter activity"/>
    <property type="evidence" value="ECO:0007669"/>
    <property type="project" value="InterPro"/>
</dbReference>
<dbReference type="GO" id="GO:0046872">
    <property type="term" value="F:metal ion binding"/>
    <property type="evidence" value="ECO:0007669"/>
    <property type="project" value="UniProtKB-KW"/>
</dbReference>
<dbReference type="CDD" id="cd06920">
    <property type="entry name" value="NEAT"/>
    <property type="match status" value="1"/>
</dbReference>
<dbReference type="Gene3D" id="1.20.58.1270">
    <property type="match status" value="1"/>
</dbReference>
<dbReference type="Gene3D" id="2.60.40.1850">
    <property type="match status" value="2"/>
</dbReference>
<dbReference type="InterPro" id="IPR019929">
    <property type="entry name" value="Iron-reg_IsdB"/>
</dbReference>
<dbReference type="InterPro" id="IPR048652">
    <property type="entry name" value="Isd_H_B_linker"/>
</dbReference>
<dbReference type="InterPro" id="IPR050436">
    <property type="entry name" value="IsdA"/>
</dbReference>
<dbReference type="InterPro" id="IPR019931">
    <property type="entry name" value="LPXTG_anchor"/>
</dbReference>
<dbReference type="InterPro" id="IPR006635">
    <property type="entry name" value="NEAT_dom"/>
</dbReference>
<dbReference type="InterPro" id="IPR037250">
    <property type="entry name" value="NEAT_dom_sf"/>
</dbReference>
<dbReference type="InterPro" id="IPR005877">
    <property type="entry name" value="YSIRK_signal_dom"/>
</dbReference>
<dbReference type="NCBIfam" id="TIGR03657">
    <property type="entry name" value="IsdB"/>
    <property type="match status" value="1"/>
</dbReference>
<dbReference type="NCBIfam" id="TIGR01167">
    <property type="entry name" value="LPXTG_anchor"/>
    <property type="match status" value="1"/>
</dbReference>
<dbReference type="NCBIfam" id="TIGR01168">
    <property type="entry name" value="YSIRK_signal"/>
    <property type="match status" value="1"/>
</dbReference>
<dbReference type="PANTHER" id="PTHR37824">
    <property type="entry name" value="IRON-REGULATED SURFACE DETERMINANT PROTEIN C"/>
    <property type="match status" value="1"/>
</dbReference>
<dbReference type="PANTHER" id="PTHR37824:SF1">
    <property type="entry name" value="IRON-REGULATED SURFACE DETERMINANT PROTEIN C"/>
    <property type="match status" value="1"/>
</dbReference>
<dbReference type="Pfam" id="PF00746">
    <property type="entry name" value="Gram_pos_anchor"/>
    <property type="match status" value="1"/>
</dbReference>
<dbReference type="Pfam" id="PF20861">
    <property type="entry name" value="Isd_H_B_linker"/>
    <property type="match status" value="1"/>
</dbReference>
<dbReference type="Pfam" id="PF05031">
    <property type="entry name" value="NEAT"/>
    <property type="match status" value="2"/>
</dbReference>
<dbReference type="Pfam" id="PF04650">
    <property type="entry name" value="YSIRK_signal"/>
    <property type="match status" value="1"/>
</dbReference>
<dbReference type="SMART" id="SM00725">
    <property type="entry name" value="NEAT"/>
    <property type="match status" value="2"/>
</dbReference>
<dbReference type="SUPFAM" id="SSF158911">
    <property type="entry name" value="NEAT domain-like"/>
    <property type="match status" value="2"/>
</dbReference>
<dbReference type="PROSITE" id="PS50847">
    <property type="entry name" value="GRAM_POS_ANCHORING"/>
    <property type="match status" value="1"/>
</dbReference>
<dbReference type="PROSITE" id="PS50978">
    <property type="entry name" value="NEAT"/>
    <property type="match status" value="2"/>
</dbReference>
<gene>
    <name type="primary">isdB</name>
    <name type="synonym">frpB</name>
    <name type="synonym">sasJ</name>
    <name type="synonym">sirH</name>
    <name type="ordered locus">SACOL1138</name>
</gene>
<sequence length="645" mass="72192">MNKQQKEFKSFYSIRKSSLGVASVAISTLLLLMSNGEAQAAAEETGGTNTEAQPKTEAVASPTTTSEKAPETKPVANAVSVSNKEVEAPTSETKEAKEVKEVKAPKETKEVKPAAKATNNTYPILNQELREAIKNPAIKDKDHSAPNSRPIDFEMKKKDGTQQFYHYASSVKPARVIFTDSKPEIELGLQSGQFWRKFEVYEGDKKLPIKLVSYDTVKDYAYIRFSVSNGTKAVKIVSSTHFNNKEEKYDYTLMEFAQPIYNSADKFKTEEDYKAEKLLAPYKKAKTLERQVYELNKIQDKLPEKLKAEYKKKLEDTKKALDEQVKSAITEFQNVQPTNEKMTDLQDTKYVVYESVENNESMMDTFVKHPIKTGMLNGKKYMVMETTNDDYWKDFMVEGQRVRTISKDAKNNTRTIIFPYVEGKTLYDAIVKVHVKTIDYDGQYHVRIVDKEAFTKANTDKSNKKEQQDNSAKKEATPATPSKPTPSPVEKESQKQDSQKDDNKQLPSVEKENDASSESGKDKTPATKPTKGEVESSSTTPTKVVSTTQNVAKPTTASSKTTKDVVQTSAGSSEAKDSAPLQKANIKNTNDGHTQSQNNKNTQENKAKSLPQTGEESNKDMTLPLMALLALSSIVAFVLPRKRKN</sequence>
<reference key="1">
    <citation type="journal article" date="2005" name="J. Bacteriol.">
        <title>Insights on evolution of virulence and resistance from the complete genome analysis of an early methicillin-resistant Staphylococcus aureus strain and a biofilm-producing methicillin-resistant Staphylococcus epidermidis strain.</title>
        <authorList>
            <person name="Gill S.R."/>
            <person name="Fouts D.E."/>
            <person name="Archer G.L."/>
            <person name="Mongodin E.F."/>
            <person name="DeBoy R.T."/>
            <person name="Ravel J."/>
            <person name="Paulsen I.T."/>
            <person name="Kolonay J.F."/>
            <person name="Brinkac L.M."/>
            <person name="Beanan M.J."/>
            <person name="Dodson R.J."/>
            <person name="Daugherty S.C."/>
            <person name="Madupu R."/>
            <person name="Angiuoli S.V."/>
            <person name="Durkin A.S."/>
            <person name="Haft D.H."/>
            <person name="Vamathevan J.J."/>
            <person name="Khouri H."/>
            <person name="Utterback T.R."/>
            <person name="Lee C."/>
            <person name="Dimitrov G."/>
            <person name="Jiang L."/>
            <person name="Qin H."/>
            <person name="Weidman J."/>
            <person name="Tran K."/>
            <person name="Kang K.H."/>
            <person name="Hance I.R."/>
            <person name="Nelson K.E."/>
            <person name="Fraser C.M."/>
        </authorList>
    </citation>
    <scope>NUCLEOTIDE SEQUENCE [LARGE SCALE GENOMIC DNA]</scope>
    <source>
        <strain>COL</strain>
    </source>
</reference>
<reference key="2">
    <citation type="journal article" date="2008" name="J. Immunol.">
        <title>Neutrophil microbicides induce a pathogen survival response in community-associated methicillin-resistant Staphylococcus aureus.</title>
        <authorList>
            <person name="Palazzolo-Ballance A.M."/>
            <person name="Reniere M.L."/>
            <person name="Braughton K.R."/>
            <person name="Sturdevant D.E."/>
            <person name="Otto M."/>
            <person name="Kreiswirth B.N."/>
            <person name="Skaar E.P."/>
            <person name="DeLeo F.R."/>
        </authorList>
    </citation>
    <scope>INDUCTION</scope>
</reference>
<organism>
    <name type="scientific">Staphylococcus aureus (strain COL)</name>
    <dbReference type="NCBI Taxonomy" id="93062"/>
    <lineage>
        <taxon>Bacteria</taxon>
        <taxon>Bacillati</taxon>
        <taxon>Bacillota</taxon>
        <taxon>Bacilli</taxon>
        <taxon>Bacillales</taxon>
        <taxon>Staphylococcaceae</taxon>
        <taxon>Staphylococcus</taxon>
    </lineage>
</organism>
<accession>Q5HGV5</accession>
<name>ISDB_STAAC</name>
<keyword id="KW-0134">Cell wall</keyword>
<keyword id="KW-0349">Heme</keyword>
<keyword id="KW-0408">Iron</keyword>
<keyword id="KW-0479">Metal-binding</keyword>
<keyword id="KW-0572">Peptidoglycan-anchor</keyword>
<keyword id="KW-0677">Repeat</keyword>
<keyword id="KW-0964">Secreted</keyword>
<keyword id="KW-0732">Signal</keyword>
<keyword id="KW-0843">Virulence</keyword>
<protein>
    <recommendedName>
        <fullName>Iron-regulated surface determinant protein B</fullName>
    </recommendedName>
    <alternativeName>
        <fullName>Fur-regulated protein B</fullName>
    </alternativeName>
    <alternativeName>
        <fullName>Staphylococcal iron-regulated protein H</fullName>
    </alternativeName>
    <alternativeName>
        <fullName>Staphylococcus aureus surface protein J</fullName>
    </alternativeName>
</protein>
<comment type="function">
    <text evidence="2">Cell wall-anchored surface receptor that extracts heme from oxidized metHb to enable growth on hemoglobin as a sole iron source. Rapidly extracts heme from hemoglobin and transfers it to IsdA or IsdC, which then relays it to the membrane transporter/IsdEF for internalization. Also promotes resistance to hydrogen peroxide and killing by neutrophils.</text>
</comment>
<comment type="subunit">
    <text evidence="2">Interacts with host HBA; this interaction allows heme extraction as iron source. Interacts with IsdA.</text>
</comment>
<comment type="subcellular location">
    <subcellularLocation>
        <location evidence="2">Secreted</location>
        <location evidence="2">Cell wall</location>
        <topology evidence="2">Peptidoglycan-anchor</topology>
    </subcellularLocation>
    <text evidence="2">Anchored to the cell wall by sortase A.</text>
</comment>
<comment type="induction">
    <text evidence="1 9">Repressed by fur in the presence of iron (By similarity). Transcriptionally up-regulated by hydrogen peroxide and to a lesser extent by hypochlorous acid and human neutrophil azurophilic granule proteins.</text>
</comment>
<comment type="similarity">
    <text evidence="10">Belongs to the IsdB family.</text>
</comment>
<proteinExistence type="evidence at transcript level"/>